<dbReference type="EC" id="2.7.11.7"/>
<dbReference type="EMBL" id="AAFI02000047">
    <property type="protein sequence ID" value="EAL66104.1"/>
    <property type="molecule type" value="Genomic_DNA"/>
</dbReference>
<dbReference type="RefSeq" id="XP_640080.1">
    <property type="nucleotide sequence ID" value="XM_634988.1"/>
</dbReference>
<dbReference type="SMR" id="Q54SF9"/>
<dbReference type="FunCoup" id="Q54SF9">
    <property type="interactions" value="401"/>
</dbReference>
<dbReference type="STRING" id="44689.Q54SF9"/>
<dbReference type="GlyGen" id="Q54SF9">
    <property type="glycosylation" value="1 site"/>
</dbReference>
<dbReference type="PaxDb" id="44689-DDB0220109"/>
<dbReference type="EnsemblProtists" id="EAL66104">
    <property type="protein sequence ID" value="EAL66104"/>
    <property type="gene ID" value="DDB_G0282489"/>
</dbReference>
<dbReference type="GeneID" id="8623609"/>
<dbReference type="KEGG" id="ddi:DDB_G0282489"/>
<dbReference type="dictyBase" id="DDB_G0282489">
    <property type="gene designation" value="mhkD"/>
</dbReference>
<dbReference type="VEuPathDB" id="AmoebaDB:DDB_G0282489"/>
<dbReference type="eggNOG" id="KOG0274">
    <property type="taxonomic scope" value="Eukaryota"/>
</dbReference>
<dbReference type="HOGENOM" id="CLU_312032_0_0_1"/>
<dbReference type="InParanoid" id="Q54SF9"/>
<dbReference type="OMA" id="SAWVIEV"/>
<dbReference type="PhylomeDB" id="Q54SF9"/>
<dbReference type="Reactome" id="R-DDI-166208">
    <property type="pathway name" value="mTORC1-mediated signalling"/>
</dbReference>
<dbReference type="PRO" id="PR:Q54SF9"/>
<dbReference type="Proteomes" id="UP000002195">
    <property type="component" value="Chromosome 3"/>
</dbReference>
<dbReference type="GO" id="GO:0005826">
    <property type="term" value="C:actomyosin contractile ring"/>
    <property type="evidence" value="ECO:0000318"/>
    <property type="project" value="GO_Central"/>
</dbReference>
<dbReference type="GO" id="GO:0005524">
    <property type="term" value="F:ATP binding"/>
    <property type="evidence" value="ECO:0000305"/>
    <property type="project" value="dictyBase"/>
</dbReference>
<dbReference type="GO" id="GO:0016905">
    <property type="term" value="F:myosin heavy chain kinase activity"/>
    <property type="evidence" value="ECO:0000250"/>
    <property type="project" value="dictyBase"/>
</dbReference>
<dbReference type="GO" id="GO:0004674">
    <property type="term" value="F:protein serine/threonine kinase activity"/>
    <property type="evidence" value="ECO:0000250"/>
    <property type="project" value="dictyBase"/>
</dbReference>
<dbReference type="GO" id="GO:0031037">
    <property type="term" value="P:myosin II filament disassembly"/>
    <property type="evidence" value="ECO:0000315"/>
    <property type="project" value="dictyBase"/>
</dbReference>
<dbReference type="GO" id="GO:0006468">
    <property type="term" value="P:protein phosphorylation"/>
    <property type="evidence" value="ECO:0000250"/>
    <property type="project" value="dictyBase"/>
</dbReference>
<dbReference type="GO" id="GO:1903013">
    <property type="term" value="P:response to differentiation-inducing factor 1"/>
    <property type="evidence" value="ECO:0007005"/>
    <property type="project" value="dictyBase"/>
</dbReference>
<dbReference type="CDD" id="cd16968">
    <property type="entry name" value="Alpha_kinase_MHCK_like"/>
    <property type="match status" value="1"/>
</dbReference>
<dbReference type="CDD" id="cd00200">
    <property type="entry name" value="WD40"/>
    <property type="match status" value="1"/>
</dbReference>
<dbReference type="Gene3D" id="3.20.200.10">
    <property type="entry name" value="MHCK/EF2 kinase"/>
    <property type="match status" value="1"/>
</dbReference>
<dbReference type="Gene3D" id="3.30.200.20">
    <property type="entry name" value="Phosphorylase Kinase, domain 1"/>
    <property type="match status" value="1"/>
</dbReference>
<dbReference type="Gene3D" id="2.130.10.10">
    <property type="entry name" value="YVTN repeat-like/Quinoprotein amine dehydrogenase"/>
    <property type="match status" value="2"/>
</dbReference>
<dbReference type="InterPro" id="IPR004166">
    <property type="entry name" value="a-kinase_dom"/>
</dbReference>
<dbReference type="InterPro" id="IPR051852">
    <property type="entry name" value="Alpha-type_PK"/>
</dbReference>
<dbReference type="InterPro" id="IPR020472">
    <property type="entry name" value="G-protein_beta_WD-40_rep"/>
</dbReference>
<dbReference type="InterPro" id="IPR011009">
    <property type="entry name" value="Kinase-like_dom_sf"/>
</dbReference>
<dbReference type="InterPro" id="IPR015943">
    <property type="entry name" value="WD40/YVTN_repeat-like_dom_sf"/>
</dbReference>
<dbReference type="InterPro" id="IPR019775">
    <property type="entry name" value="WD40_repeat_CS"/>
</dbReference>
<dbReference type="InterPro" id="IPR036322">
    <property type="entry name" value="WD40_repeat_dom_sf"/>
</dbReference>
<dbReference type="InterPro" id="IPR001680">
    <property type="entry name" value="WD40_rpt"/>
</dbReference>
<dbReference type="PANTHER" id="PTHR45992:SF2">
    <property type="entry name" value="EUKARYOTIC ELONGATION FACTOR 2 KINASE"/>
    <property type="match status" value="1"/>
</dbReference>
<dbReference type="PANTHER" id="PTHR45992">
    <property type="entry name" value="EUKARYOTIC ELONGATION FACTOR 2 KINASE-RELATED"/>
    <property type="match status" value="1"/>
</dbReference>
<dbReference type="Pfam" id="PF02816">
    <property type="entry name" value="Alpha_kinase"/>
    <property type="match status" value="1"/>
</dbReference>
<dbReference type="Pfam" id="PF00400">
    <property type="entry name" value="WD40"/>
    <property type="match status" value="6"/>
</dbReference>
<dbReference type="PRINTS" id="PR00320">
    <property type="entry name" value="GPROTEINBRPT"/>
</dbReference>
<dbReference type="SMART" id="SM00811">
    <property type="entry name" value="Alpha_kinase"/>
    <property type="match status" value="1"/>
</dbReference>
<dbReference type="SMART" id="SM00320">
    <property type="entry name" value="WD40"/>
    <property type="match status" value="7"/>
</dbReference>
<dbReference type="SUPFAM" id="SSF56112">
    <property type="entry name" value="Protein kinase-like (PK-like)"/>
    <property type="match status" value="1"/>
</dbReference>
<dbReference type="SUPFAM" id="SSF50978">
    <property type="entry name" value="WD40 repeat-like"/>
    <property type="match status" value="1"/>
</dbReference>
<dbReference type="PROSITE" id="PS51158">
    <property type="entry name" value="ALPHA_KINASE"/>
    <property type="match status" value="1"/>
</dbReference>
<dbReference type="PROSITE" id="PS00678">
    <property type="entry name" value="WD_REPEATS_1"/>
    <property type="match status" value="2"/>
</dbReference>
<dbReference type="PROSITE" id="PS50082">
    <property type="entry name" value="WD_REPEATS_2"/>
    <property type="match status" value="6"/>
</dbReference>
<dbReference type="PROSITE" id="PS50294">
    <property type="entry name" value="WD_REPEATS_REGION"/>
    <property type="match status" value="1"/>
</dbReference>
<name>MHCKD_DICDI</name>
<sequence length="941" mass="105417">MEDNSFLKLSKKIEKILEKNDYLKKKVEQLTKSVDNHEFKIQELLLLLRKNNIHPTTTTTTTTTTNNNSTCVGISNSPPLSPRTSTDSMTNSNNSSATSSTTPSPTQTSTITTTSQIDPNSLTNSNNSFIPINSPISQTTVNNNNNNNNNNNNNNNNNNNNNNNNNNNNLNNQTITSPLSTSSSNSNSNSNSSSPIVSPVSSPQLSGSGNRPRIQFLGNGRMPSTGNLFKKEDSSDSLLKYSKDSEHLYIVPTTPRPSKSPSMDFIASTSLINTVSSNNTDSTNNDNSSILNDQQNQQQNQQQQNQQQQQEEINFITTEDKLPNLPDSNCQWAIIWEYSANDDEWTKALIIVEIDAKPFAKGALRNAYQLKIRSNAMQCFNHFATPIHEKYMEGKKLNLSQIPKLNQNLSLDTLYVAKDSKTSVNFNRYFEDVKMQMVCKSYGERYNSNHPPKKIEFLSAWVIEIQGTTNYRVGNRNSSNNTLYGLELFMKGEFKKQNSNFGTVFTERNTPQSFSHFTYECTTHEMVVVDIQGVDDIYTDPQVHTKDGKGYGEGNLGQKGIEKFLISHKCSPICLQFGLPPIGLETGRNAHRVIRGTMLLPDLTPDLYEPEYPLIENQPSNPLNSELTSIVHLSGHDERVCSLLINQDKTKLYSASADGYVKIWNLTNNEDLSKIQMIDSFRAHRRSIEKMLLNEKYLFTASSDGTIKIWSLPTTTTTTTTSKQSSSSSSSSYECIGKLEDHTAEVNDMCIDIENNFLVSCSFDKQIKIYDLSTFKCIKSLNAHGKSIKSIYMSGKYLFSSSNDQSIKIWDLEMCMCVYGMNDAHDAPITSLRMFGNRLFSASKDGEIKDWNLSTFQPTTTLDQHNMAITDILVTSNGYLFVSSDDSTIRIIDISNQNEPIKIISSTKAHRSGVNSLATDGKRIFSGGCDNLIKVWNWKNK</sequence>
<reference key="1">
    <citation type="journal article" date="2005" name="Nature">
        <title>The genome of the social amoeba Dictyostelium discoideum.</title>
        <authorList>
            <person name="Eichinger L."/>
            <person name="Pachebat J.A."/>
            <person name="Gloeckner G."/>
            <person name="Rajandream M.A."/>
            <person name="Sucgang R."/>
            <person name="Berriman M."/>
            <person name="Song J."/>
            <person name="Olsen R."/>
            <person name="Szafranski K."/>
            <person name="Xu Q."/>
            <person name="Tunggal B."/>
            <person name="Kummerfeld S."/>
            <person name="Madera M."/>
            <person name="Konfortov B.A."/>
            <person name="Rivero F."/>
            <person name="Bankier A.T."/>
            <person name="Lehmann R."/>
            <person name="Hamlin N."/>
            <person name="Davies R."/>
            <person name="Gaudet P."/>
            <person name="Fey P."/>
            <person name="Pilcher K."/>
            <person name="Chen G."/>
            <person name="Saunders D."/>
            <person name="Sodergren E.J."/>
            <person name="Davis P."/>
            <person name="Kerhornou A."/>
            <person name="Nie X."/>
            <person name="Hall N."/>
            <person name="Anjard C."/>
            <person name="Hemphill L."/>
            <person name="Bason N."/>
            <person name="Farbrother P."/>
            <person name="Desany B."/>
            <person name="Just E."/>
            <person name="Morio T."/>
            <person name="Rost R."/>
            <person name="Churcher C.M."/>
            <person name="Cooper J."/>
            <person name="Haydock S."/>
            <person name="van Driessche N."/>
            <person name="Cronin A."/>
            <person name="Goodhead I."/>
            <person name="Muzny D.M."/>
            <person name="Mourier T."/>
            <person name="Pain A."/>
            <person name="Lu M."/>
            <person name="Harper D."/>
            <person name="Lindsay R."/>
            <person name="Hauser H."/>
            <person name="James K.D."/>
            <person name="Quiles M."/>
            <person name="Madan Babu M."/>
            <person name="Saito T."/>
            <person name="Buchrieser C."/>
            <person name="Wardroper A."/>
            <person name="Felder M."/>
            <person name="Thangavelu M."/>
            <person name="Johnson D."/>
            <person name="Knights A."/>
            <person name="Loulseged H."/>
            <person name="Mungall K.L."/>
            <person name="Oliver K."/>
            <person name="Price C."/>
            <person name="Quail M.A."/>
            <person name="Urushihara H."/>
            <person name="Hernandez J."/>
            <person name="Rabbinowitsch E."/>
            <person name="Steffen D."/>
            <person name="Sanders M."/>
            <person name="Ma J."/>
            <person name="Kohara Y."/>
            <person name="Sharp S."/>
            <person name="Simmonds M.N."/>
            <person name="Spiegler S."/>
            <person name="Tivey A."/>
            <person name="Sugano S."/>
            <person name="White B."/>
            <person name="Walker D."/>
            <person name="Woodward J.R."/>
            <person name="Winckler T."/>
            <person name="Tanaka Y."/>
            <person name="Shaulsky G."/>
            <person name="Schleicher M."/>
            <person name="Weinstock G.M."/>
            <person name="Rosenthal A."/>
            <person name="Cox E.C."/>
            <person name="Chisholm R.L."/>
            <person name="Gibbs R.A."/>
            <person name="Loomis W.F."/>
            <person name="Platzer M."/>
            <person name="Kay R.R."/>
            <person name="Williams J.G."/>
            <person name="Dear P.H."/>
            <person name="Noegel A.A."/>
            <person name="Barrell B.G."/>
            <person name="Kuspa A."/>
        </authorList>
    </citation>
    <scope>NUCLEOTIDE SEQUENCE [LARGE SCALE GENOMIC DNA]</scope>
    <source>
        <strain>AX4</strain>
    </source>
</reference>
<reference key="2">
    <citation type="journal article" date="2002" name="J. Muscle Res. Cell Motil.">
        <title>Signaling pathways regulating Dictyostelium myosin II.</title>
        <authorList>
            <person name="De la Roche M.A."/>
            <person name="Smith J.L."/>
            <person name="Betapudi V."/>
            <person name="Egelhoff T.T."/>
            <person name="Cote G.P."/>
        </authorList>
    </citation>
    <scope>NOMENCLATURE</scope>
</reference>
<reference key="3">
    <citation type="journal article" date="2005" name="Mol. Biol. Cell">
        <title>Multiple myosin II heavy chain kinases: roles in filament assembly control and proper cytokinesis in Dictyostelium.</title>
        <authorList>
            <person name="Yumura S."/>
            <person name="Yoshida M."/>
            <person name="Betapudi V."/>
            <person name="Licate L.S."/>
            <person name="Iwadate Y."/>
            <person name="Nagasaki A."/>
            <person name="Uyeda T.Q.P."/>
            <person name="Egelhoff T.T."/>
        </authorList>
    </citation>
    <scope>FUNCTION</scope>
</reference>
<evidence type="ECO:0000250" key="1"/>
<evidence type="ECO:0000255" key="2"/>
<evidence type="ECO:0000255" key="3">
    <source>
        <dbReference type="PROSITE-ProRule" id="PRU00501"/>
    </source>
</evidence>
<evidence type="ECO:0000256" key="4">
    <source>
        <dbReference type="SAM" id="MobiDB-lite"/>
    </source>
</evidence>
<evidence type="ECO:0000269" key="5">
    <source>
    </source>
</evidence>
<evidence type="ECO:0000305" key="6"/>
<protein>
    <recommendedName>
        <fullName>Myosin heavy chain kinase D</fullName>
        <shortName>MHCK-D</shortName>
        <ecNumber>2.7.11.7</ecNumber>
    </recommendedName>
</protein>
<gene>
    <name type="primary">mhkD</name>
    <name type="synonym">mhckD</name>
    <name type="ORF">DDB_G0282489</name>
</gene>
<accession>Q54SF9</accession>
<keyword id="KW-0067">ATP-binding</keyword>
<keyword id="KW-0175">Coiled coil</keyword>
<keyword id="KW-0418">Kinase</keyword>
<keyword id="KW-0547">Nucleotide-binding</keyword>
<keyword id="KW-1185">Reference proteome</keyword>
<keyword id="KW-0677">Repeat</keyword>
<keyword id="KW-0723">Serine/threonine-protein kinase</keyword>
<keyword id="KW-0808">Transferase</keyword>
<keyword id="KW-0853">WD repeat</keyword>
<organism>
    <name type="scientific">Dictyostelium discoideum</name>
    <name type="common">Social amoeba</name>
    <dbReference type="NCBI Taxonomy" id="44689"/>
    <lineage>
        <taxon>Eukaryota</taxon>
        <taxon>Amoebozoa</taxon>
        <taxon>Evosea</taxon>
        <taxon>Eumycetozoa</taxon>
        <taxon>Dictyostelia</taxon>
        <taxon>Dictyosteliales</taxon>
        <taxon>Dictyosteliaceae</taxon>
        <taxon>Dictyostelium</taxon>
    </lineage>
</organism>
<proteinExistence type="inferred from homology"/>
<comment type="function">
    <text evidence="1 5">Phosphorylates threonine (By similarity). Not critical for regulating the assembly and disassembly of myosin II filament.</text>
</comment>
<comment type="catalytic activity">
    <reaction>
        <text>L-threonyl-[myosin heavy-chain] + ATP = O-phospho-L-threonyl-[myosin heavy-chain] + ADP + H(+)</text>
        <dbReference type="Rhea" id="RHEA:11424"/>
        <dbReference type="Rhea" id="RHEA-COMP:13718"/>
        <dbReference type="Rhea" id="RHEA-COMP:13719"/>
        <dbReference type="ChEBI" id="CHEBI:15378"/>
        <dbReference type="ChEBI" id="CHEBI:30013"/>
        <dbReference type="ChEBI" id="CHEBI:30616"/>
        <dbReference type="ChEBI" id="CHEBI:61977"/>
        <dbReference type="ChEBI" id="CHEBI:456216"/>
        <dbReference type="EC" id="2.7.11.7"/>
    </reaction>
</comment>
<comment type="similarity">
    <text evidence="6">Belongs to the protein kinase superfamily. Alpha-type protein kinase family. ALPK subfamily.</text>
</comment>
<feature type="chain" id="PRO_0000361272" description="Myosin heavy chain kinase D">
    <location>
        <begin position="1"/>
        <end position="941"/>
    </location>
</feature>
<feature type="domain" description="Alpha-type protein kinase" evidence="3">
    <location>
        <begin position="337"/>
        <end position="582"/>
    </location>
</feature>
<feature type="repeat" description="WD 1">
    <location>
        <begin position="635"/>
        <end position="674"/>
    </location>
</feature>
<feature type="repeat" description="WD 2">
    <location>
        <begin position="683"/>
        <end position="720"/>
    </location>
</feature>
<feature type="repeat" description="WD 3">
    <location>
        <begin position="741"/>
        <end position="780"/>
    </location>
</feature>
<feature type="repeat" description="WD 4">
    <location>
        <begin position="783"/>
        <end position="820"/>
    </location>
</feature>
<feature type="repeat" description="WD 5">
    <location>
        <begin position="824"/>
        <end position="861"/>
    </location>
</feature>
<feature type="repeat" description="WD 6">
    <location>
        <begin position="864"/>
        <end position="902"/>
    </location>
</feature>
<feature type="repeat" description="WD 7">
    <location>
        <begin position="909"/>
        <end position="941"/>
    </location>
</feature>
<feature type="region of interest" description="Disordered" evidence="4">
    <location>
        <begin position="57"/>
        <end position="234"/>
    </location>
</feature>
<feature type="region of interest" description="Disordered" evidence="4">
    <location>
        <begin position="276"/>
        <end position="310"/>
    </location>
</feature>
<feature type="coiled-coil region" evidence="2">
    <location>
        <begin position="8"/>
        <end position="48"/>
    </location>
</feature>
<feature type="coiled-coil region" evidence="2">
    <location>
        <begin position="289"/>
        <end position="317"/>
    </location>
</feature>
<feature type="compositionally biased region" description="Low complexity" evidence="4">
    <location>
        <begin position="57"/>
        <end position="70"/>
    </location>
</feature>
<feature type="compositionally biased region" description="Low complexity" evidence="4">
    <location>
        <begin position="84"/>
        <end position="115"/>
    </location>
</feature>
<feature type="compositionally biased region" description="Low complexity" evidence="4">
    <location>
        <begin position="124"/>
        <end position="206"/>
    </location>
</feature>